<reference key="1">
    <citation type="journal article" date="1999" name="Mol. Gen. Genet.">
        <title>Identification of nuclear genes encoding mitochondrial proteins: isolation of a collection of D. melanogaster cDNAs homologous to sequences in the Human Gene Index database.</title>
        <authorList>
            <person name="Caggese C."/>
            <person name="Ragone G."/>
            <person name="Perrini B."/>
            <person name="Moschetti R."/>
            <person name="de Pinto V."/>
            <person name="Caizzi R."/>
            <person name="Barsanti P."/>
        </authorList>
    </citation>
    <scope>NUCLEOTIDE SEQUENCE [MRNA]</scope>
    <source>
        <tissue>Ovary</tissue>
    </source>
</reference>
<reference key="2">
    <citation type="journal article" date="2000" name="Science">
        <title>The genome sequence of Drosophila melanogaster.</title>
        <authorList>
            <person name="Adams M.D."/>
            <person name="Celniker S.E."/>
            <person name="Holt R.A."/>
            <person name="Evans C.A."/>
            <person name="Gocayne J.D."/>
            <person name="Amanatides P.G."/>
            <person name="Scherer S.E."/>
            <person name="Li P.W."/>
            <person name="Hoskins R.A."/>
            <person name="Galle R.F."/>
            <person name="George R.A."/>
            <person name="Lewis S.E."/>
            <person name="Richards S."/>
            <person name="Ashburner M."/>
            <person name="Henderson S.N."/>
            <person name="Sutton G.G."/>
            <person name="Wortman J.R."/>
            <person name="Yandell M.D."/>
            <person name="Zhang Q."/>
            <person name="Chen L.X."/>
            <person name="Brandon R.C."/>
            <person name="Rogers Y.-H.C."/>
            <person name="Blazej R.G."/>
            <person name="Champe M."/>
            <person name="Pfeiffer B.D."/>
            <person name="Wan K.H."/>
            <person name="Doyle C."/>
            <person name="Baxter E.G."/>
            <person name="Helt G."/>
            <person name="Nelson C.R."/>
            <person name="Miklos G.L.G."/>
            <person name="Abril J.F."/>
            <person name="Agbayani A."/>
            <person name="An H.-J."/>
            <person name="Andrews-Pfannkoch C."/>
            <person name="Baldwin D."/>
            <person name="Ballew R.M."/>
            <person name="Basu A."/>
            <person name="Baxendale J."/>
            <person name="Bayraktaroglu L."/>
            <person name="Beasley E.M."/>
            <person name="Beeson K.Y."/>
            <person name="Benos P.V."/>
            <person name="Berman B.P."/>
            <person name="Bhandari D."/>
            <person name="Bolshakov S."/>
            <person name="Borkova D."/>
            <person name="Botchan M.R."/>
            <person name="Bouck J."/>
            <person name="Brokstein P."/>
            <person name="Brottier P."/>
            <person name="Burtis K.C."/>
            <person name="Busam D.A."/>
            <person name="Butler H."/>
            <person name="Cadieu E."/>
            <person name="Center A."/>
            <person name="Chandra I."/>
            <person name="Cherry J.M."/>
            <person name="Cawley S."/>
            <person name="Dahlke C."/>
            <person name="Davenport L.B."/>
            <person name="Davies P."/>
            <person name="de Pablos B."/>
            <person name="Delcher A."/>
            <person name="Deng Z."/>
            <person name="Mays A.D."/>
            <person name="Dew I."/>
            <person name="Dietz S.M."/>
            <person name="Dodson K."/>
            <person name="Doup L.E."/>
            <person name="Downes M."/>
            <person name="Dugan-Rocha S."/>
            <person name="Dunkov B.C."/>
            <person name="Dunn P."/>
            <person name="Durbin K.J."/>
            <person name="Evangelista C.C."/>
            <person name="Ferraz C."/>
            <person name="Ferriera S."/>
            <person name="Fleischmann W."/>
            <person name="Fosler C."/>
            <person name="Gabrielian A.E."/>
            <person name="Garg N.S."/>
            <person name="Gelbart W.M."/>
            <person name="Glasser K."/>
            <person name="Glodek A."/>
            <person name="Gong F."/>
            <person name="Gorrell J.H."/>
            <person name="Gu Z."/>
            <person name="Guan P."/>
            <person name="Harris M."/>
            <person name="Harris N.L."/>
            <person name="Harvey D.A."/>
            <person name="Heiman T.J."/>
            <person name="Hernandez J.R."/>
            <person name="Houck J."/>
            <person name="Hostin D."/>
            <person name="Houston K.A."/>
            <person name="Howland T.J."/>
            <person name="Wei M.-H."/>
            <person name="Ibegwam C."/>
            <person name="Jalali M."/>
            <person name="Kalush F."/>
            <person name="Karpen G.H."/>
            <person name="Ke Z."/>
            <person name="Kennison J.A."/>
            <person name="Ketchum K.A."/>
            <person name="Kimmel B.E."/>
            <person name="Kodira C.D."/>
            <person name="Kraft C.L."/>
            <person name="Kravitz S."/>
            <person name="Kulp D."/>
            <person name="Lai Z."/>
            <person name="Lasko P."/>
            <person name="Lei Y."/>
            <person name="Levitsky A.A."/>
            <person name="Li J.H."/>
            <person name="Li Z."/>
            <person name="Liang Y."/>
            <person name="Lin X."/>
            <person name="Liu X."/>
            <person name="Mattei B."/>
            <person name="McIntosh T.C."/>
            <person name="McLeod M.P."/>
            <person name="McPherson D."/>
            <person name="Merkulov G."/>
            <person name="Milshina N.V."/>
            <person name="Mobarry C."/>
            <person name="Morris J."/>
            <person name="Moshrefi A."/>
            <person name="Mount S.M."/>
            <person name="Moy M."/>
            <person name="Murphy B."/>
            <person name="Murphy L."/>
            <person name="Muzny D.M."/>
            <person name="Nelson D.L."/>
            <person name="Nelson D.R."/>
            <person name="Nelson K.A."/>
            <person name="Nixon K."/>
            <person name="Nusskern D.R."/>
            <person name="Pacleb J.M."/>
            <person name="Palazzolo M."/>
            <person name="Pittman G.S."/>
            <person name="Pan S."/>
            <person name="Pollard J."/>
            <person name="Puri V."/>
            <person name="Reese M.G."/>
            <person name="Reinert K."/>
            <person name="Remington K."/>
            <person name="Saunders R.D.C."/>
            <person name="Scheeler F."/>
            <person name="Shen H."/>
            <person name="Shue B.C."/>
            <person name="Siden-Kiamos I."/>
            <person name="Simpson M."/>
            <person name="Skupski M.P."/>
            <person name="Smith T.J."/>
            <person name="Spier E."/>
            <person name="Spradling A.C."/>
            <person name="Stapleton M."/>
            <person name="Strong R."/>
            <person name="Sun E."/>
            <person name="Svirskas R."/>
            <person name="Tector C."/>
            <person name="Turner R."/>
            <person name="Venter E."/>
            <person name="Wang A.H."/>
            <person name="Wang X."/>
            <person name="Wang Z.-Y."/>
            <person name="Wassarman D.A."/>
            <person name="Weinstock G.M."/>
            <person name="Weissenbach J."/>
            <person name="Williams S.M."/>
            <person name="Woodage T."/>
            <person name="Worley K.C."/>
            <person name="Wu D."/>
            <person name="Yang S."/>
            <person name="Yao Q.A."/>
            <person name="Ye J."/>
            <person name="Yeh R.-F."/>
            <person name="Zaveri J.S."/>
            <person name="Zhan M."/>
            <person name="Zhang G."/>
            <person name="Zhao Q."/>
            <person name="Zheng L."/>
            <person name="Zheng X.H."/>
            <person name="Zhong F.N."/>
            <person name="Zhong W."/>
            <person name="Zhou X."/>
            <person name="Zhu S.C."/>
            <person name="Zhu X."/>
            <person name="Smith H.O."/>
            <person name="Gibbs R.A."/>
            <person name="Myers E.W."/>
            <person name="Rubin G.M."/>
            <person name="Venter J.C."/>
        </authorList>
    </citation>
    <scope>NUCLEOTIDE SEQUENCE [LARGE SCALE GENOMIC DNA]</scope>
    <source>
        <strain>Berkeley</strain>
    </source>
</reference>
<reference key="3">
    <citation type="journal article" date="2002" name="Genome Biol.">
        <title>Annotation of the Drosophila melanogaster euchromatic genome: a systematic review.</title>
        <authorList>
            <person name="Misra S."/>
            <person name="Crosby M.A."/>
            <person name="Mungall C.J."/>
            <person name="Matthews B.B."/>
            <person name="Campbell K.S."/>
            <person name="Hradecky P."/>
            <person name="Huang Y."/>
            <person name="Kaminker J.S."/>
            <person name="Millburn G.H."/>
            <person name="Prochnik S.E."/>
            <person name="Smith C.D."/>
            <person name="Tupy J.L."/>
            <person name="Whitfield E.J."/>
            <person name="Bayraktaroglu L."/>
            <person name="Berman B.P."/>
            <person name="Bettencourt B.R."/>
            <person name="Celniker S.E."/>
            <person name="de Grey A.D.N.J."/>
            <person name="Drysdale R.A."/>
            <person name="Harris N.L."/>
            <person name="Richter J."/>
            <person name="Russo S."/>
            <person name="Schroeder A.J."/>
            <person name="Shu S.Q."/>
            <person name="Stapleton M."/>
            <person name="Yamada C."/>
            <person name="Ashburner M."/>
            <person name="Gelbart W.M."/>
            <person name="Rubin G.M."/>
            <person name="Lewis S.E."/>
        </authorList>
    </citation>
    <scope>GENOME REANNOTATION</scope>
    <source>
        <strain>Berkeley</strain>
    </source>
</reference>
<reference key="4">
    <citation type="submission" date="2003-12" db="EMBL/GenBank/DDBJ databases">
        <authorList>
            <person name="Stapleton M."/>
            <person name="Brokstein P."/>
            <person name="Hong L."/>
            <person name="Agbayani A."/>
            <person name="Carlson J.W."/>
            <person name="Champe M."/>
            <person name="Chavez C."/>
            <person name="Dorsett V."/>
            <person name="Dresnek D."/>
            <person name="Farfan D."/>
            <person name="Frise E."/>
            <person name="George R.A."/>
            <person name="Gonzalez M."/>
            <person name="Guarin H."/>
            <person name="Kronmiller B."/>
            <person name="Li P.W."/>
            <person name="Liao G."/>
            <person name="Miranda A."/>
            <person name="Mungall C.J."/>
            <person name="Nunoo J."/>
            <person name="Pacleb J.M."/>
            <person name="Paragas V."/>
            <person name="Park S."/>
            <person name="Patel S."/>
            <person name="Phouanenavong S."/>
            <person name="Wan K.H."/>
            <person name="Yu C."/>
            <person name="Lewis S.E."/>
            <person name="Rubin G.M."/>
            <person name="Celniker S.E."/>
        </authorList>
    </citation>
    <scope>NUCLEOTIDE SEQUENCE [LARGE SCALE MRNA]</scope>
    <source>
        <strain>Berkeley</strain>
        <tissue>Embryo</tissue>
    </source>
</reference>
<accession>Q94514</accession>
<accession>Q53XG7</accession>
<accession>Q9VGH4</accession>
<name>COX5A_DROME</name>
<protein>
    <recommendedName>
        <fullName>Cytochrome c oxidase subunit 5A, mitochondrial</fullName>
    </recommendedName>
    <alternativeName>
        <fullName>Cytochrome c oxidase polypeptide Va</fullName>
    </alternativeName>
</protein>
<dbReference type="EMBL" id="Y09065">
    <property type="protein sequence ID" value="CAA70286.1"/>
    <property type="molecule type" value="mRNA"/>
</dbReference>
<dbReference type="EMBL" id="AE014297">
    <property type="protein sequence ID" value="AAF54706.1"/>
    <property type="molecule type" value="Genomic_DNA"/>
</dbReference>
<dbReference type="EMBL" id="AE014297">
    <property type="protein sequence ID" value="AAN13534.1"/>
    <property type="molecule type" value="Genomic_DNA"/>
</dbReference>
<dbReference type="EMBL" id="BT011037">
    <property type="protein sequence ID" value="AAR30197.1"/>
    <property type="molecule type" value="mRNA"/>
</dbReference>
<dbReference type="RefSeq" id="NP_001262488.1">
    <property type="nucleotide sequence ID" value="NM_001275559.1"/>
</dbReference>
<dbReference type="RefSeq" id="NP_001303486.1">
    <property type="nucleotide sequence ID" value="NM_001316557.1"/>
</dbReference>
<dbReference type="RefSeq" id="NP_477217.1">
    <property type="nucleotide sequence ID" value="NM_057869.4"/>
</dbReference>
<dbReference type="RefSeq" id="NP_731641.1">
    <property type="nucleotide sequence ID" value="NM_169436.3"/>
</dbReference>
<dbReference type="SMR" id="Q94514"/>
<dbReference type="BioGRID" id="66552">
    <property type="interactions" value="28"/>
</dbReference>
<dbReference type="ComplexPortal" id="CPX-8620">
    <property type="entry name" value="Mitochondrial respiratory chain complex IV"/>
</dbReference>
<dbReference type="ComplexPortal" id="CPX-8621">
    <property type="entry name" value="Mitochondrial respiratory chain complex IV, testis-specific variant"/>
</dbReference>
<dbReference type="DIP" id="DIP-18939N"/>
<dbReference type="FunCoup" id="Q94514">
    <property type="interactions" value="1510"/>
</dbReference>
<dbReference type="IntAct" id="Q94514">
    <property type="interactions" value="54"/>
</dbReference>
<dbReference type="MINT" id="Q94514"/>
<dbReference type="STRING" id="7227.FBpp0081947"/>
<dbReference type="PaxDb" id="7227-FBpp0081947"/>
<dbReference type="DNASU" id="41432"/>
<dbReference type="EnsemblMetazoa" id="FBtr0082473">
    <property type="protein sequence ID" value="FBpp0081947"/>
    <property type="gene ID" value="FBgn0019624"/>
</dbReference>
<dbReference type="EnsemblMetazoa" id="FBtr0082474">
    <property type="protein sequence ID" value="FBpp0081948"/>
    <property type="gene ID" value="FBgn0019624"/>
</dbReference>
<dbReference type="EnsemblMetazoa" id="FBtr0334890">
    <property type="protein sequence ID" value="FBpp0306911"/>
    <property type="gene ID" value="FBgn0019624"/>
</dbReference>
<dbReference type="EnsemblMetazoa" id="FBtr0347553">
    <property type="protein sequence ID" value="FBpp0312586"/>
    <property type="gene ID" value="FBgn0019624"/>
</dbReference>
<dbReference type="GeneID" id="41432"/>
<dbReference type="KEGG" id="dme:Dmel_CG14724"/>
<dbReference type="AGR" id="FB:FBgn0019624"/>
<dbReference type="CTD" id="9377"/>
<dbReference type="FlyBase" id="FBgn0019624">
    <property type="gene designation" value="COX5A"/>
</dbReference>
<dbReference type="VEuPathDB" id="VectorBase:FBgn0019624"/>
<dbReference type="eggNOG" id="KOG4077">
    <property type="taxonomic scope" value="Eukaryota"/>
</dbReference>
<dbReference type="GeneTree" id="ENSGT00390000001424"/>
<dbReference type="HOGENOM" id="CLU_099086_1_1_1"/>
<dbReference type="InParanoid" id="Q94514"/>
<dbReference type="OMA" id="MEKWPAD"/>
<dbReference type="OrthoDB" id="5778907at2759"/>
<dbReference type="PhylomeDB" id="Q94514"/>
<dbReference type="Reactome" id="R-DME-5628897">
    <property type="pathway name" value="TP53 Regulates Metabolic Genes"/>
</dbReference>
<dbReference type="Reactome" id="R-DME-611105">
    <property type="pathway name" value="Respiratory electron transport"/>
</dbReference>
<dbReference type="Reactome" id="R-DME-9707564">
    <property type="pathway name" value="Cytoprotection by HMOX1"/>
</dbReference>
<dbReference type="Reactome" id="R-DME-9837999">
    <property type="pathway name" value="Mitochondrial protein degradation"/>
</dbReference>
<dbReference type="Reactome" id="R-DME-9864848">
    <property type="pathway name" value="Complex IV assembly"/>
</dbReference>
<dbReference type="SignaLink" id="Q94514"/>
<dbReference type="UniPathway" id="UPA00705"/>
<dbReference type="BioGRID-ORCS" id="41432">
    <property type="hits" value="0 hits in 1 CRISPR screen"/>
</dbReference>
<dbReference type="ChiTaRS" id="COX5A">
    <property type="organism name" value="fly"/>
</dbReference>
<dbReference type="GenomeRNAi" id="41432"/>
<dbReference type="PRO" id="PR:Q94514"/>
<dbReference type="Proteomes" id="UP000000803">
    <property type="component" value="Chromosome 3R"/>
</dbReference>
<dbReference type="Bgee" id="FBgn0019624">
    <property type="expression patterns" value="Expressed in adult hindgut (Drosophila) and 277 other cell types or tissues"/>
</dbReference>
<dbReference type="ExpressionAtlas" id="Q94514">
    <property type="expression patterns" value="baseline and differential"/>
</dbReference>
<dbReference type="GO" id="GO:0005743">
    <property type="term" value="C:mitochondrial inner membrane"/>
    <property type="evidence" value="ECO:0000314"/>
    <property type="project" value="FlyBase"/>
</dbReference>
<dbReference type="GO" id="GO:0005739">
    <property type="term" value="C:mitochondrion"/>
    <property type="evidence" value="ECO:0000314"/>
    <property type="project" value="FlyBase"/>
</dbReference>
<dbReference type="GO" id="GO:0045277">
    <property type="term" value="C:respiratory chain complex IV"/>
    <property type="evidence" value="ECO:0000314"/>
    <property type="project" value="FlyBase"/>
</dbReference>
<dbReference type="GO" id="GO:0046872">
    <property type="term" value="F:metal ion binding"/>
    <property type="evidence" value="ECO:0007669"/>
    <property type="project" value="UniProtKB-KW"/>
</dbReference>
<dbReference type="GO" id="GO:0006123">
    <property type="term" value="P:mitochondrial electron transport, cytochrome c to oxygen"/>
    <property type="evidence" value="ECO:0000250"/>
    <property type="project" value="FlyBase"/>
</dbReference>
<dbReference type="GO" id="GO:0045787">
    <property type="term" value="P:positive regulation of cell cycle"/>
    <property type="evidence" value="ECO:0000315"/>
    <property type="project" value="FlyBase"/>
</dbReference>
<dbReference type="CDD" id="cd00923">
    <property type="entry name" value="Cyt_c_Oxidase_Va"/>
    <property type="match status" value="1"/>
</dbReference>
<dbReference type="FunFam" id="1.25.40.40:FF:000003">
    <property type="entry name" value="Cytochrome c oxidase subunit 5A, mitochondrial"/>
    <property type="match status" value="1"/>
</dbReference>
<dbReference type="Gene3D" id="1.25.40.40">
    <property type="entry name" value="Cytochrome c oxidase, subunit Va/VI"/>
    <property type="match status" value="1"/>
</dbReference>
<dbReference type="InterPro" id="IPR003204">
    <property type="entry name" value="Cyt_c_oxidase_su5A/6"/>
</dbReference>
<dbReference type="InterPro" id="IPR036545">
    <property type="entry name" value="Cyt_c_oxidase_su5A/6_sf"/>
</dbReference>
<dbReference type="PANTHER" id="PTHR14200">
    <property type="entry name" value="CYTOCHROME C OXIDASE POLYPEPTIDE"/>
    <property type="match status" value="1"/>
</dbReference>
<dbReference type="PANTHER" id="PTHR14200:SF11">
    <property type="entry name" value="CYTOCHROME C OXIDASE SUBUNIT 5A, MITOCHONDRIAL"/>
    <property type="match status" value="1"/>
</dbReference>
<dbReference type="Pfam" id="PF02284">
    <property type="entry name" value="COX5A"/>
    <property type="match status" value="1"/>
</dbReference>
<dbReference type="SUPFAM" id="SSF48479">
    <property type="entry name" value="Cytochrome c oxidase subunit E"/>
    <property type="match status" value="1"/>
</dbReference>
<proteinExistence type="evidence at transcript level"/>
<evidence type="ECO:0000250" key="1">
    <source>
        <dbReference type="UniProtKB" id="P00427"/>
    </source>
</evidence>
<evidence type="ECO:0000255" key="2"/>
<evidence type="ECO:0000305" key="3"/>
<evidence type="ECO:0000312" key="4">
    <source>
        <dbReference type="FlyBase" id="FBgn0019624"/>
    </source>
</evidence>
<keyword id="KW-0349">Heme</keyword>
<keyword id="KW-0408">Iron</keyword>
<keyword id="KW-0472">Membrane</keyword>
<keyword id="KW-0479">Metal-binding</keyword>
<keyword id="KW-0496">Mitochondrion</keyword>
<keyword id="KW-0999">Mitochondrion inner membrane</keyword>
<keyword id="KW-1185">Reference proteome</keyword>
<keyword id="KW-0809">Transit peptide</keyword>
<gene>
    <name evidence="4" type="primary">COX5A</name>
    <name evidence="4" type="synonym">CoVa</name>
    <name evidence="4" type="ORF">CG14724</name>
</gene>
<sequence length="149" mass="16622">MLSITARNLASALRSSLVGTSSRVAAVRCLHGTEESAEEFDKRYEKYFSREGIDGWEIRKGMNDLLGMDLVPSPKIIEAGLRASRRVNDIALAIRWLEGCKDKCGDQKATLYPYLLEKITPTLQELGIPTIEELGYDKPELALKSVYDA</sequence>
<comment type="function">
    <text evidence="1">Component of the cytochrome c oxidase, the last enzyme in the mitochondrial electron transport chain which drives oxidative phosphorylation. The respiratory chain contains 3 multisubunit complexes succinate dehydrogenase (complex II, CII), ubiquinol-cytochrome c oxidoreductase (cytochrome b-c1 complex, complex III, CIII) and cytochrome c oxidase (complex IV, CIV), that cooperate to transfer electrons derived from NADH and succinate to molecular oxygen, creating an electrochemical gradient over the inner membrane that drives transmembrane transport and the ATP synthase. Cytochrome c oxidase is the component of the respiratory chain that catalyzes the reduction of oxygen to water. Electrons originating from reduced cytochrome c in the intermembrane space (IMS) are transferred via the dinuclear copper A center (CU(A)) of subunit 2 and heme A of subunit 1 to the active site in subunit 1, a binuclear center (BNC) formed by heme A3 and copper B (CU(B)). The BNC reduces molecular oxygen to 2 water molecules using 4 electrons from cytochrome c in the IMS and 4 protons from the mitochondrial matrix.</text>
</comment>
<comment type="pathway">
    <text evidence="1">Energy metabolism; oxidative phosphorylation.</text>
</comment>
<comment type="subunit">
    <text evidence="1">Component of the cytochrome c oxidase (complex IV, CIV), a multisubunit enzyme composed of a catalytic core of 3 subunits and several supernumerary subunits. The complex exists as a monomer or a dimer and forms supercomplexes (SCs) in the inner mitochondrial membrane with ubiquinol-cytochrome c oxidoreductase (cytochrome b-c1 complex, complex III, CIII).</text>
</comment>
<comment type="subcellular location">
    <subcellularLocation>
        <location evidence="1">Mitochondrion inner membrane</location>
        <topology evidence="1">Peripheral membrane protein</topology>
        <orientation evidence="1">Matrix side</orientation>
    </subcellularLocation>
</comment>
<comment type="similarity">
    <text evidence="3">Belongs to the cytochrome c oxidase subunit 5A family.</text>
</comment>
<organism>
    <name type="scientific">Drosophila melanogaster</name>
    <name type="common">Fruit fly</name>
    <dbReference type="NCBI Taxonomy" id="7227"/>
    <lineage>
        <taxon>Eukaryota</taxon>
        <taxon>Metazoa</taxon>
        <taxon>Ecdysozoa</taxon>
        <taxon>Arthropoda</taxon>
        <taxon>Hexapoda</taxon>
        <taxon>Insecta</taxon>
        <taxon>Pterygota</taxon>
        <taxon>Neoptera</taxon>
        <taxon>Endopterygota</taxon>
        <taxon>Diptera</taxon>
        <taxon>Brachycera</taxon>
        <taxon>Muscomorpha</taxon>
        <taxon>Ephydroidea</taxon>
        <taxon>Drosophilidae</taxon>
        <taxon>Drosophila</taxon>
        <taxon>Sophophora</taxon>
    </lineage>
</organism>
<feature type="transit peptide" description="Mitochondrion" evidence="2">
    <location>
        <begin position="1"/>
        <end status="unknown"/>
    </location>
</feature>
<feature type="chain" id="PRO_0000006104" description="Cytochrome c oxidase subunit 5A, mitochondrial">
    <location>
        <begin status="unknown"/>
        <end position="149"/>
    </location>
</feature>
<feature type="sequence conflict" description="In Ref. 1; CAA70286." evidence="3" ref="1">
    <original>S</original>
    <variation>N</variation>
    <location>
        <position position="73"/>
    </location>
</feature>